<reference key="1">
    <citation type="journal article" date="2005" name="J. Gen. Virol.">
        <title>A novel class of herpesvirus with bivalve hosts.</title>
        <authorList>
            <person name="Davison A.J."/>
            <person name="Trus B.L."/>
            <person name="Cheng N."/>
            <person name="Steven A.C."/>
            <person name="Watson M.S."/>
            <person name="Cunningham C."/>
            <person name="Le Deuff R.M."/>
            <person name="Renault T."/>
        </authorList>
    </citation>
    <scope>NUCLEOTIDE SEQUENCE [LARGE SCALE GENOMIC DNA]</scope>
</reference>
<accession>Q6R7K2</accession>
<name>Y021_OSHVF</name>
<gene>
    <name type="ORF">ORF21</name>
</gene>
<keyword id="KW-1185">Reference proteome</keyword>
<organism>
    <name type="scientific">Ostreid herpesvirus 1 (isolate France)</name>
    <name type="common">OsHV-1</name>
    <name type="synonym">Pacific oyster herpesvirus</name>
    <dbReference type="NCBI Taxonomy" id="654903"/>
    <lineage>
        <taxon>Viruses</taxon>
        <taxon>Duplodnaviria</taxon>
        <taxon>Heunggongvirae</taxon>
        <taxon>Peploviricota</taxon>
        <taxon>Herviviricetes</taxon>
        <taxon>Herpesvirales</taxon>
        <taxon>Malacoherpesviridae</taxon>
        <taxon>Ostreavirus</taxon>
        <taxon>Ostreavirus ostreidmalaco1</taxon>
        <taxon>Ostreid herpesvirus 1</taxon>
    </lineage>
</organism>
<protein>
    <recommendedName>
        <fullName>Uncharacterized protein ORF21</fullName>
    </recommendedName>
</protein>
<dbReference type="EMBL" id="AY509253">
    <property type="protein sequence ID" value="AAS00913.1"/>
    <property type="molecule type" value="Genomic_DNA"/>
</dbReference>
<dbReference type="RefSeq" id="YP_024566.1">
    <property type="nucleotide sequence ID" value="NC_005881.2"/>
</dbReference>
<dbReference type="KEGG" id="vg:2948245"/>
<dbReference type="Proteomes" id="UP000007021">
    <property type="component" value="Segment"/>
</dbReference>
<feature type="chain" id="PRO_0000385052" description="Uncharacterized protein ORF21">
    <location>
        <begin position="1"/>
        <end position="984"/>
    </location>
</feature>
<proteinExistence type="predicted"/>
<sequence>MPKKIKPNDLADLDQGTILKFLVESIYDTGDDETEKLPGLVHPEFKDRESREKYKNLYYLHGSKIKVDFHNMVDAKIWVRKILDEARVNYTTVGYNRIENSYPTRILVDMDWVKNFNLTNQDAMQLLMKCGVPNYEQREWAVIWGLVELFFRKHAYPFYITPLNGRLKVGMNHILEKVFNPDALTTQLLYVEFFRCLERGDLLERIQEKMVCKRNALGGIIADRGELLDFEDYEEGDPMDPTIISGVKKMKMDRFVSIMKGDRSTNNMEGGKLSAVLVARLLNGKNVEGQTDVEYASVEALRLYKEYGLSNQTLLTNIIKHMVPLVAGMKDLLKEVDDPSIINIDEKTKRIWVGDRYMFKSGEMVLISYDKSKGIAKDARLRYTNLQTIKKTDPFYITFYKPKEPRLGYDIDFVKFWALDAGYKDNMGMFLYDLVKDKIDADTKKLLAHFKFDPEIYIDDTYFEETYDYDENKIYMDRLIPYLRDIMMEFYMNDEEDPNNIRIEGIIYKWYNGKLIPVTSATEEISGRPIVEAINKYLPKLMTPMIKIQCKEFLEITSDPVILSELDRIRNLLFSNVNETVVSLKTLRDNITNVEIYQNSKDFFFKAFFADKIFDQENMNDFYNAAEFAVPISSIEEVFKKPYTSKKFFFYQNGEEGSLWDGSTFFQGKVLKMDFTVNEFLTKILFETALEPPNDIDMAALPIELIIPILKLRKDGQYLLDNWYYLFTAFPFARSETMIFFPPAQKMLKADWAMNIISERPSAIPPPKFINSNDVYEYNMENKGTIYFKSDTKTIVLYHKNSGLMTEDDLYVLLHTMDLLSIEFTPINVQSTNRPEDIYIMFVSPRISGASSRGVKLYNNYEDMIKTEYSMSPDNFLFPVFENYGDGSERSGGQRNLLKSKPRIRSVLHELNNYTRSIYYVDNVKRAITAALKISALKGYIHKKTNRSLLNGSNLVPIGGQDVNDLTPLWLEIENYESIKTRYQ</sequence>
<organismHost>
    <name type="scientific">Magallana gigas</name>
    <name type="common">Pacific oyster</name>
    <name type="synonym">Crassostrea gigas</name>
    <dbReference type="NCBI Taxonomy" id="29159"/>
</organismHost>
<organismHost>
    <name type="scientific">Pecten maximus</name>
    <name type="common">King scallop</name>
    <name type="synonym">Pilgrim's clam</name>
    <dbReference type="NCBI Taxonomy" id="6579"/>
</organismHost>